<organism>
    <name type="scientific">Gibberella zeae (strain ATCC MYA-4620 / CBS 123657 / FGSC 9075 / NRRL 31084 / PH-1)</name>
    <name type="common">Wheat head blight fungus</name>
    <name type="synonym">Fusarium graminearum</name>
    <dbReference type="NCBI Taxonomy" id="229533"/>
    <lineage>
        <taxon>Eukaryota</taxon>
        <taxon>Fungi</taxon>
        <taxon>Dikarya</taxon>
        <taxon>Ascomycota</taxon>
        <taxon>Pezizomycotina</taxon>
        <taxon>Sordariomycetes</taxon>
        <taxon>Hypocreomycetidae</taxon>
        <taxon>Hypocreales</taxon>
        <taxon>Nectriaceae</taxon>
        <taxon>Fusarium</taxon>
    </lineage>
</organism>
<evidence type="ECO:0000250" key="1">
    <source>
        <dbReference type="UniProtKB" id="A0A059TC02"/>
    </source>
</evidence>
<evidence type="ECO:0000250" key="2">
    <source>
        <dbReference type="UniProtKB" id="P51110"/>
    </source>
</evidence>
<evidence type="ECO:0000250" key="3">
    <source>
        <dbReference type="UniProtKB" id="P53199"/>
    </source>
</evidence>
<evidence type="ECO:0000250" key="4">
    <source>
        <dbReference type="UniProtKB" id="Q12068"/>
    </source>
</evidence>
<evidence type="ECO:0000256" key="5">
    <source>
        <dbReference type="SAM" id="MobiDB-lite"/>
    </source>
</evidence>
<evidence type="ECO:0000269" key="6">
    <source>
    </source>
</evidence>
<evidence type="ECO:0000303" key="7">
    <source>
    </source>
</evidence>
<evidence type="ECO:0000305" key="8"/>
<evidence type="ECO:0000305" key="9">
    <source>
    </source>
</evidence>
<dbReference type="EC" id="1.1.1.-" evidence="3"/>
<dbReference type="EMBL" id="HG970332">
    <property type="protein sequence ID" value="CEF72100.1"/>
    <property type="molecule type" value="Genomic_DNA"/>
</dbReference>
<dbReference type="RefSeq" id="XP_011315848.1">
    <property type="nucleotide sequence ID" value="XM_011317546.1"/>
</dbReference>
<dbReference type="SMR" id="I1S4E7"/>
<dbReference type="STRING" id="229533.I1S4E7"/>
<dbReference type="KEGG" id="fgr:FGSG_11714"/>
<dbReference type="VEuPathDB" id="FungiDB:FGRAMPH1_01G00597"/>
<dbReference type="eggNOG" id="KOG1430">
    <property type="taxonomic scope" value="Eukaryota"/>
</dbReference>
<dbReference type="HOGENOM" id="CLU_007383_6_8_1"/>
<dbReference type="InParanoid" id="I1S4E7"/>
<dbReference type="OrthoDB" id="86382at110618"/>
<dbReference type="UniPathway" id="UPA00768"/>
<dbReference type="Proteomes" id="UP000070720">
    <property type="component" value="Chromosome 1"/>
</dbReference>
<dbReference type="GO" id="GO:0005789">
    <property type="term" value="C:endoplasmic reticulum membrane"/>
    <property type="evidence" value="ECO:0007669"/>
    <property type="project" value="UniProtKB-SubCell"/>
</dbReference>
<dbReference type="GO" id="GO:0016616">
    <property type="term" value="F:oxidoreductase activity, acting on the CH-OH group of donors, NAD or NADP as acceptor"/>
    <property type="evidence" value="ECO:0007669"/>
    <property type="project" value="InterPro"/>
</dbReference>
<dbReference type="GO" id="GO:0016126">
    <property type="term" value="P:sterol biosynthetic process"/>
    <property type="evidence" value="ECO:0007669"/>
    <property type="project" value="UniProtKB-UniPathway"/>
</dbReference>
<dbReference type="Gene3D" id="3.40.50.720">
    <property type="entry name" value="NAD(P)-binding Rossmann-like Domain"/>
    <property type="match status" value="1"/>
</dbReference>
<dbReference type="InterPro" id="IPR002225">
    <property type="entry name" value="3Beta_OHSteriod_DH/Estase"/>
</dbReference>
<dbReference type="InterPro" id="IPR036291">
    <property type="entry name" value="NAD(P)-bd_dom_sf"/>
</dbReference>
<dbReference type="PANTHER" id="PTHR43000">
    <property type="entry name" value="DTDP-D-GLUCOSE 4,6-DEHYDRATASE-RELATED"/>
    <property type="match status" value="1"/>
</dbReference>
<dbReference type="Pfam" id="PF01073">
    <property type="entry name" value="3Beta_HSD"/>
    <property type="match status" value="1"/>
</dbReference>
<dbReference type="SUPFAM" id="SSF51735">
    <property type="entry name" value="NAD(P)-binding Rossmann-fold domains"/>
    <property type="match status" value="1"/>
</dbReference>
<keyword id="KW-0256">Endoplasmic reticulum</keyword>
<keyword id="KW-0444">Lipid biosynthesis</keyword>
<keyword id="KW-0443">Lipid metabolism</keyword>
<keyword id="KW-0472">Membrane</keyword>
<keyword id="KW-0520">NAD</keyword>
<keyword id="KW-0521">NADP</keyword>
<keyword id="KW-0560">Oxidoreductase</keyword>
<keyword id="KW-1185">Reference proteome</keyword>
<keyword id="KW-0752">Steroid biosynthesis</keyword>
<sequence length="303" mass="34289">MPKLQLRSLASQDKIEEIFERFKPHAVIHTASPSYMDTKKTLMSKNVDGTKALLEAARTCSDTKAFVFTSSDEAIMPTQEPTSEENAHRYDENNAPNAPNTYALSKALAKRLVIAANSEELYTSVIRIPGIYGKYDDNFIPQLVSSMREKEHKMQVGNNTKVFEFLYVNKAAEAHIMAMKALLNPSTRDQVGGEDFFISDGKPQGLFDFCRRIYAAAGSPVRPEEVTSIPLSVMQTMASTMEWVYWVFTLGTVQPSLRRISMDHLDTGCCWSLDKARRILGYEPVQDQDKVIERTMDWTMKTF</sequence>
<gene>
    <name evidence="7" type="primary">ERG26</name>
    <name type="ORF">FGRAMPH1_01T00597</name>
</gene>
<reference key="1">
    <citation type="journal article" date="2007" name="Science">
        <title>The Fusarium graminearum genome reveals a link between localized polymorphism and pathogen specialization.</title>
        <authorList>
            <person name="Cuomo C.A."/>
            <person name="Gueldener U."/>
            <person name="Xu J.-R."/>
            <person name="Trail F."/>
            <person name="Turgeon B.G."/>
            <person name="Di Pietro A."/>
            <person name="Walton J.D."/>
            <person name="Ma L.-J."/>
            <person name="Baker S.E."/>
            <person name="Rep M."/>
            <person name="Adam G."/>
            <person name="Antoniw J."/>
            <person name="Baldwin T."/>
            <person name="Calvo S.E."/>
            <person name="Chang Y.-L."/>
            <person name="DeCaprio D."/>
            <person name="Gale L.R."/>
            <person name="Gnerre S."/>
            <person name="Goswami R.S."/>
            <person name="Hammond-Kosack K."/>
            <person name="Harris L.J."/>
            <person name="Hilburn K."/>
            <person name="Kennell J.C."/>
            <person name="Kroken S."/>
            <person name="Magnuson J.K."/>
            <person name="Mannhaupt G."/>
            <person name="Mauceli E.W."/>
            <person name="Mewes H.-W."/>
            <person name="Mitterbauer R."/>
            <person name="Muehlbauer G."/>
            <person name="Muensterkoetter M."/>
            <person name="Nelson D."/>
            <person name="O'Donnell K."/>
            <person name="Ouellet T."/>
            <person name="Qi W."/>
            <person name="Quesneville H."/>
            <person name="Roncero M.I.G."/>
            <person name="Seong K.-Y."/>
            <person name="Tetko I.V."/>
            <person name="Urban M."/>
            <person name="Waalwijk C."/>
            <person name="Ward T.J."/>
            <person name="Yao J."/>
            <person name="Birren B.W."/>
            <person name="Kistler H.C."/>
        </authorList>
    </citation>
    <scope>NUCLEOTIDE SEQUENCE [LARGE SCALE GENOMIC DNA]</scope>
    <source>
        <strain>ATCC MYA-4620 / CBS 123657 / FGSC 9075 / NRRL 31084 / PH-1</strain>
    </source>
</reference>
<reference key="2">
    <citation type="journal article" date="2010" name="Nature">
        <title>Comparative genomics reveals mobile pathogenicity chromosomes in Fusarium.</title>
        <authorList>
            <person name="Ma L.-J."/>
            <person name="van der Does H.C."/>
            <person name="Borkovich K.A."/>
            <person name="Coleman J.J."/>
            <person name="Daboussi M.-J."/>
            <person name="Di Pietro A."/>
            <person name="Dufresne M."/>
            <person name="Freitag M."/>
            <person name="Grabherr M."/>
            <person name="Henrissat B."/>
            <person name="Houterman P.M."/>
            <person name="Kang S."/>
            <person name="Shim W.-B."/>
            <person name="Woloshuk C."/>
            <person name="Xie X."/>
            <person name="Xu J.-R."/>
            <person name="Antoniw J."/>
            <person name="Baker S.E."/>
            <person name="Bluhm B.H."/>
            <person name="Breakspear A."/>
            <person name="Brown D.W."/>
            <person name="Butchko R.A.E."/>
            <person name="Chapman S."/>
            <person name="Coulson R."/>
            <person name="Coutinho P.M."/>
            <person name="Danchin E.G.J."/>
            <person name="Diener A."/>
            <person name="Gale L.R."/>
            <person name="Gardiner D.M."/>
            <person name="Goff S."/>
            <person name="Hammond-Kosack K.E."/>
            <person name="Hilburn K."/>
            <person name="Hua-Van A."/>
            <person name="Jonkers W."/>
            <person name="Kazan K."/>
            <person name="Kodira C.D."/>
            <person name="Koehrsen M."/>
            <person name="Kumar L."/>
            <person name="Lee Y.-H."/>
            <person name="Li L."/>
            <person name="Manners J.M."/>
            <person name="Miranda-Saavedra D."/>
            <person name="Mukherjee M."/>
            <person name="Park G."/>
            <person name="Park J."/>
            <person name="Park S.-Y."/>
            <person name="Proctor R.H."/>
            <person name="Regev A."/>
            <person name="Ruiz-Roldan M.C."/>
            <person name="Sain D."/>
            <person name="Sakthikumar S."/>
            <person name="Sykes S."/>
            <person name="Schwartz D.C."/>
            <person name="Turgeon B.G."/>
            <person name="Wapinski I."/>
            <person name="Yoder O."/>
            <person name="Young S."/>
            <person name="Zeng Q."/>
            <person name="Zhou S."/>
            <person name="Galagan J."/>
            <person name="Cuomo C.A."/>
            <person name="Kistler H.C."/>
            <person name="Rep M."/>
        </authorList>
    </citation>
    <scope>GENOME REANNOTATION</scope>
    <source>
        <strain>ATCC MYA-4620 / CBS 123657 / FGSC 9075 / NRRL 31084 / PH-1</strain>
    </source>
</reference>
<reference key="3">
    <citation type="journal article" date="2015" name="BMC Genomics">
        <title>The completed genome sequence of the pathogenic ascomycete fungus Fusarium graminearum.</title>
        <authorList>
            <person name="King R."/>
            <person name="Urban M."/>
            <person name="Hammond-Kosack M.C.U."/>
            <person name="Hassani-Pak K."/>
            <person name="Hammond-Kosack K.E."/>
        </authorList>
    </citation>
    <scope>NUCLEOTIDE SEQUENCE [LARGE SCALE GENOMIC DNA]</scope>
    <source>
        <strain>ATCC MYA-4620 / CBS 123657 / FGSC 9075 / NRRL 31084 / PH-1</strain>
    </source>
</reference>
<reference key="4">
    <citation type="journal article" date="2013" name="New Phytol.">
        <title>Characterization of the sterol 14alpha-demethylases of Fusarium graminearum identifies a novel genus-specific CYP51 function.</title>
        <authorList>
            <person name="Fan J."/>
            <person name="Urban M."/>
            <person name="Parker J.E."/>
            <person name="Brewer H.C."/>
            <person name="Kelly S.L."/>
            <person name="Hammond-Kosack K.E."/>
            <person name="Fraaije B.A."/>
            <person name="Liu X."/>
            <person name="Cools H.J."/>
        </authorList>
    </citation>
    <scope>FUNCTION</scope>
    <scope>PATHWAY</scope>
</reference>
<proteinExistence type="inferred from homology"/>
<feature type="chain" id="PRO_0000454364" description="Sterol-4-alpha-carboxylate 3-dehydrogenase ERG26, decarboxylating">
    <location>
        <begin position="1"/>
        <end position="303"/>
    </location>
</feature>
<feature type="region of interest" description="Disordered" evidence="5">
    <location>
        <begin position="77"/>
        <end position="96"/>
    </location>
</feature>
<feature type="active site" description="Proton donor" evidence="4">
    <location>
        <position position="106"/>
    </location>
</feature>
<feature type="binding site" evidence="2">
    <location>
        <begin position="8"/>
        <end position="9"/>
    </location>
    <ligand>
        <name>NADP(+)</name>
        <dbReference type="ChEBI" id="CHEBI:58349"/>
    </ligand>
</feature>
<feature type="binding site" evidence="2">
    <location>
        <begin position="30"/>
        <end position="32"/>
    </location>
    <ligand>
        <name>NADP(+)</name>
        <dbReference type="ChEBI" id="CHEBI:58349"/>
    </ligand>
</feature>
<feature type="binding site" evidence="2">
    <location>
        <position position="71"/>
    </location>
    <ligand>
        <name>substrate</name>
    </ligand>
</feature>
<feature type="binding site" evidence="1">
    <location>
        <position position="102"/>
    </location>
    <ligand>
        <name>NADP(+)</name>
        <dbReference type="ChEBI" id="CHEBI:58349"/>
    </ligand>
</feature>
<feature type="binding site" evidence="2">
    <location>
        <position position="102"/>
    </location>
    <ligand>
        <name>substrate</name>
    </ligand>
</feature>
<feature type="binding site" evidence="2">
    <location>
        <position position="106"/>
    </location>
    <ligand>
        <name>NADP(+)</name>
        <dbReference type="ChEBI" id="CHEBI:58349"/>
    </ligand>
</feature>
<feature type="binding site" evidence="2">
    <location>
        <begin position="128"/>
        <end position="131"/>
    </location>
    <ligand>
        <name>NADP(+)</name>
        <dbReference type="ChEBI" id="CHEBI:58349"/>
    </ligand>
</feature>
<name>ERG26_GIBZE</name>
<comment type="function">
    <text evidence="3 9">Sterol-4-alpha-carboxylate 3-dehydrogenase; part of the third module of ergosterol biosynthesis pathway that includes the late steps of the pathway (By similarity). ERG26 is a catalytic component of the C-4 demethylation complex that catalyzes the conversion of 4,4-dimethylfecosterol into fecosterol via 4-methylfecosterol (By similarity). The third module or late pathway involves the ergosterol synthesis itself through consecutive reactions that mainly occur in the endoplasmic reticulum (ER) membrane. Firstly, the squalene synthase ERG9 catalyzes the condensation of 2 farnesyl pyrophosphate moieties to form squalene, which is the precursor of all steroids. Squalene synthase is crucial for balancing the incorporation of farnesyl diphosphate (FPP) into sterol and nonsterol isoprene synthesis. Secondly, squalene is converted into lanosterol by the consecutive action of the squalene epoxidase ERG1 and the lanosterol synthase ERG7. Then, the delta(24)-sterol C-methyltransferase ERG6 methylates lanosterol at C-24 to produce eburicol. Eburicol is the substrate of the sterol 14-alpha demethylase encoded by CYP51A, CYP51B and CYP51C, to yield 4,4,24-trimethyl ergosta-8,14,24(28)-trienol. CYP51B encodes the enzyme primarily responsible for sterol 14-alpha-demethylation, and plays an essential role in ascospore formation. CYP51A encodes an additional sterol 14-alpha-demethylase, induced on ergosterol depletion and responsible for the intrinsic variation in azole sensitivity. The third CYP51 isoform, CYP51C, does not encode a sterol 14-alpha-demethylase, but is required for full virulence on host wheat ears. The C-14 reductase ERG24 then reduces the C14=C15 double bond which leads to 4,4-dimethylfecosterol. A sequence of further demethylations at C-4, involving the C-4 demethylation complex containing the C-4 methylsterol oxidases ERG25, the sterol-4-alpha-carboxylate 3-dehydrogenase ERG26 and the 3-keto-steroid reductase ERG27, leads to the production of fecosterol via 4-methylfecosterol. ERG28 has a role as a scaffold to help anchor ERG25, ERG26 and ERG27 to the endoplasmic reticulum. The C-8 sterol isomerase ERG2 then catalyzes the reaction which results in unsaturation at C-7 in the B ring of sterols and thus converts fecosterol to episterol. The sterol-C5-desaturases ERG3A and ERG3BB then catalyze the introduction of a C-5 double bond in the B ring to produce 5-dehydroepisterol. The C-22 sterol desaturases ERG5A and ERG5B further convert 5-dehydroepisterol into ergosta-5,7,22,24(28)-tetraen-3beta-ol by forming the C-22(23) double bond in the sterol side chain. Finally, ergosta-5,7,22,24(28)-tetraen-3beta-ol is substrate of the C-24(28) sterol reductase ERG4 to produce ergosterol (Probable).</text>
</comment>
<comment type="pathway">
    <text evidence="9">Steroid metabolism; ergosterol biosynthesis.</text>
</comment>
<comment type="subunit">
    <text evidence="3">Heterotetramer of ERG25, ERG26, ERG27 and ERG28 (By similarity). ERG28 acts as a scaffold to tether ERG27 and other 4,4-demethylation-related enzymes, forming a demethylation enzyme complex, in the endoplasmic reticulum (By similarity).</text>
</comment>
<comment type="subcellular location">
    <subcellularLocation>
        <location evidence="3">Endoplasmic reticulum membrane</location>
        <topology evidence="3">Peripheral membrane protein</topology>
    </subcellularLocation>
</comment>
<comment type="miscellaneous">
    <text evidence="6">In Fusarium, the biosynthesis pathway of the sterol precursors leading to the prevalent sterol ergosterol differs from yeast. The ringsystem of lanosterol in S.cerevisiae is firstly demethylised in three enzymatic steps leading to the intermediate zymosterol and secondly a methyl group is added to zymosterol by the sterol 24-C-methyltransferase to form fecosterol. In Fusarium, lanosterol is firstly transmethylated by the sterol 24-C-methyltransferase leading to the intermediate eburicol and secondly demethylated in three steps to form fecosterol.</text>
</comment>
<comment type="similarity">
    <text evidence="8">Belongs to the 3-beta-HSD family.</text>
</comment>
<accession>I1S4E7</accession>
<accession>A0A098D107</accession>
<protein>
    <recommendedName>
        <fullName evidence="3">Sterol-4-alpha-carboxylate 3-dehydrogenase ERG26, decarboxylating</fullName>
        <ecNumber evidence="3">1.1.1.-</ecNumber>
    </recommendedName>
    <alternativeName>
        <fullName evidence="3">C-3 sterol dehydrogenase ERG26</fullName>
    </alternativeName>
    <alternativeName>
        <fullName evidence="3">C-4 decarboxylase ERG26</fullName>
    </alternativeName>
    <alternativeName>
        <fullName evidence="7">Ergosterol biosynthetic protein 26</fullName>
    </alternativeName>
</protein>